<name>OFUT4_MOUSE</name>
<sequence length="489" mass="55533">MAARCTEAVLAALGVLSVCSASSSGSEASGEAEREEPWDGAVFRPPAALGAVGIARGPGSPPPGNREAVDLPVLLWWSPGLFPHFPGDSERIQCAHGACVASRDRRARADPRTRALLFYGTDFRAADAPLPRLAHQSWALLHEESPLNNFLLSHGPGIRLFNLTATFSRHSDYPLPLQWLPGAAYLRRPAPPPRERAEWRRRGYAPLLYLQSHCDVPSDRDRYVRELMRYIPVDSYGKCLQNREPPTVRLQDTATATTEDPELMAFLSRYKFHLALENAICNDYMTEKLWRPMHLGAVPVYRGSPSVRDWMPNNHSVILIDDFESPQKLAEFIDFLDKNDDEYMKYLAYKQPGGITNQFLLDNLEHREWGVNDPMLPNYLNGFECFVCDHELARLNAEKAHASSHGDIPVPEPRIAQSSHMNCPVPTPGFGKVEEIPENDSWKEMWLQDYWQGLYQGEALTAMIHNNETQQRKFWDYVHEIFMKRNKNL</sequence>
<feature type="chain" id="PRO_0000299010" description="GDP-fucose protein O-fucosyltransferase 4">
    <location>
        <begin position="1"/>
        <end position="489"/>
    </location>
</feature>
<feature type="topological domain" description="Cytoplasmic" evidence="3">
    <location>
        <begin position="1"/>
        <end position="7"/>
    </location>
</feature>
<feature type="transmembrane region" description="Helical; Signal-anchor for type II membrane protein" evidence="3">
    <location>
        <begin position="8"/>
        <end position="24"/>
    </location>
</feature>
<feature type="topological domain" description="Lumenal" evidence="3">
    <location>
        <begin position="25"/>
        <end position="489"/>
    </location>
</feature>
<feature type="glycosylation site" description="N-linked (GlcNAc...) asparagine" evidence="3">
    <location>
        <position position="162"/>
    </location>
</feature>
<feature type="disulfide bond" evidence="1">
    <location>
        <begin position="385"/>
        <end position="388"/>
    </location>
</feature>
<feature type="sequence conflict" description="In Ref. 2; BAB29123." evidence="5" ref="2">
    <original>A</original>
    <variation>V</variation>
    <location>
        <position position="21"/>
    </location>
</feature>
<feature type="sequence conflict" description="In Ref. 2; BAB29123." evidence="5" ref="2">
    <original>G</original>
    <variation>R</variation>
    <location>
        <position position="25"/>
    </location>
</feature>
<feature type="sequence conflict" description="In Ref. 2; BAB29123." evidence="5" ref="2">
    <original>G</original>
    <variation>S</variation>
    <location>
        <position position="80"/>
    </location>
</feature>
<feature type="sequence conflict" description="In Ref. 2; BAB29123." evidence="5" ref="2">
    <original>G</original>
    <variation>R</variation>
    <location>
        <position position="97"/>
    </location>
</feature>
<dbReference type="EC" id="2.4.1.221" evidence="2"/>
<dbReference type="EC" id="2.4.1.-" evidence="2"/>
<dbReference type="EMBL" id="AJ542393">
    <property type="protein sequence ID" value="CAD62573.1"/>
    <property type="molecule type" value="mRNA"/>
</dbReference>
<dbReference type="EMBL" id="AK014029">
    <property type="protein sequence ID" value="BAB29123.1"/>
    <property type="molecule type" value="mRNA"/>
</dbReference>
<dbReference type="EMBL" id="AK030310">
    <property type="protein sequence ID" value="BAC26892.1"/>
    <property type="molecule type" value="mRNA"/>
</dbReference>
<dbReference type="EMBL" id="AK046461">
    <property type="protein sequence ID" value="BAC32740.1"/>
    <property type="molecule type" value="mRNA"/>
</dbReference>
<dbReference type="EMBL" id="BC145735">
    <property type="protein sequence ID" value="AAI45736.1"/>
    <property type="molecule type" value="mRNA"/>
</dbReference>
<dbReference type="CCDS" id="CCDS26851.1"/>
<dbReference type="RefSeq" id="NP_082704.1">
    <property type="nucleotide sequence ID" value="NM_028428.2"/>
</dbReference>
<dbReference type="SMR" id="Q8BHC9"/>
<dbReference type="BioGRID" id="215746">
    <property type="interactions" value="12"/>
</dbReference>
<dbReference type="FunCoup" id="Q8BHC9">
    <property type="interactions" value="2498"/>
</dbReference>
<dbReference type="STRING" id="10090.ENSMUSP00000040370"/>
<dbReference type="CAZy" id="GT10">
    <property type="family name" value="Glycosyltransferase Family 10"/>
</dbReference>
<dbReference type="CarbonylDB" id="Q8BHC9"/>
<dbReference type="GlyConnect" id="2118">
    <property type="glycosylation" value="2 N-Linked glycans (2 sites)"/>
</dbReference>
<dbReference type="GlyCosmos" id="Q8BHC9">
    <property type="glycosylation" value="2 sites, 2 glycans"/>
</dbReference>
<dbReference type="GlyGen" id="Q8BHC9">
    <property type="glycosylation" value="4 sites, 4 N-linked glycans (3 sites)"/>
</dbReference>
<dbReference type="iPTMnet" id="Q8BHC9"/>
<dbReference type="PhosphoSitePlus" id="Q8BHC9"/>
<dbReference type="PaxDb" id="10090-ENSMUSP00000040370"/>
<dbReference type="ProteomicsDB" id="273015"/>
<dbReference type="Pumba" id="Q8BHC9"/>
<dbReference type="Antibodypedia" id="2883">
    <property type="antibodies" value="130 antibodies from 21 providers"/>
</dbReference>
<dbReference type="DNASU" id="73068"/>
<dbReference type="Ensembl" id="ENSMUST00000048016.3">
    <property type="protein sequence ID" value="ENSMUSP00000040370.2"/>
    <property type="gene ID" value="ENSMUSG00000039357.3"/>
</dbReference>
<dbReference type="GeneID" id="73068"/>
<dbReference type="KEGG" id="mmu:73068"/>
<dbReference type="UCSC" id="uc007skk.1">
    <property type="organism name" value="mouse"/>
</dbReference>
<dbReference type="AGR" id="MGI:1920318"/>
<dbReference type="CTD" id="170384"/>
<dbReference type="MGI" id="MGI:1920318">
    <property type="gene designation" value="Fut11"/>
</dbReference>
<dbReference type="VEuPathDB" id="HostDB:ENSMUSG00000039357"/>
<dbReference type="eggNOG" id="KOG2619">
    <property type="taxonomic scope" value="Eukaryota"/>
</dbReference>
<dbReference type="GeneTree" id="ENSGT00940000158983"/>
<dbReference type="HOGENOM" id="CLU_032075_0_1_1"/>
<dbReference type="InParanoid" id="Q8BHC9"/>
<dbReference type="OMA" id="EHREWGV"/>
<dbReference type="OrthoDB" id="9993460at2759"/>
<dbReference type="PhylomeDB" id="Q8BHC9"/>
<dbReference type="TreeFam" id="TF316348"/>
<dbReference type="Reactome" id="R-MMU-9037629">
    <property type="pathway name" value="Lewis blood group biosynthesis"/>
</dbReference>
<dbReference type="UniPathway" id="UPA00378"/>
<dbReference type="BioGRID-ORCS" id="73068">
    <property type="hits" value="7 hits in 76 CRISPR screens"/>
</dbReference>
<dbReference type="PRO" id="PR:Q8BHC9"/>
<dbReference type="Proteomes" id="UP000000589">
    <property type="component" value="Chromosome 14"/>
</dbReference>
<dbReference type="RNAct" id="Q8BHC9">
    <property type="molecule type" value="protein"/>
</dbReference>
<dbReference type="Bgee" id="ENSMUSG00000039357">
    <property type="expression patterns" value="Expressed in lumbar dorsal root ganglion and 228 other cell types or tissues"/>
</dbReference>
<dbReference type="ExpressionAtlas" id="Q8BHC9">
    <property type="expression patterns" value="baseline and differential"/>
</dbReference>
<dbReference type="GO" id="GO:0005783">
    <property type="term" value="C:endoplasmic reticulum"/>
    <property type="evidence" value="ECO:0000250"/>
    <property type="project" value="UniProtKB"/>
</dbReference>
<dbReference type="GO" id="GO:0005789">
    <property type="term" value="C:endoplasmic reticulum membrane"/>
    <property type="evidence" value="ECO:0007669"/>
    <property type="project" value="UniProtKB-SubCell"/>
</dbReference>
<dbReference type="GO" id="GO:0000139">
    <property type="term" value="C:Golgi membrane"/>
    <property type="evidence" value="ECO:0007669"/>
    <property type="project" value="InterPro"/>
</dbReference>
<dbReference type="GO" id="GO:0046920">
    <property type="term" value="F:alpha-(1-&gt;3)-fucosyltransferase activity"/>
    <property type="evidence" value="ECO:0007669"/>
    <property type="project" value="InterPro"/>
</dbReference>
<dbReference type="GO" id="GO:0008417">
    <property type="term" value="F:fucosyltransferase activity"/>
    <property type="evidence" value="ECO:0000250"/>
    <property type="project" value="UniProtKB"/>
</dbReference>
<dbReference type="GO" id="GO:0046922">
    <property type="term" value="F:peptide-O-fucosyltransferase activity"/>
    <property type="evidence" value="ECO:0000250"/>
    <property type="project" value="UniProtKB"/>
</dbReference>
<dbReference type="GO" id="GO:0036071">
    <property type="term" value="P:N-glycan fucosylation"/>
    <property type="evidence" value="ECO:0000250"/>
    <property type="project" value="UniProtKB"/>
</dbReference>
<dbReference type="GO" id="GO:0050714">
    <property type="term" value="P:positive regulation of protein secretion"/>
    <property type="evidence" value="ECO:0000250"/>
    <property type="project" value="UniProtKB"/>
</dbReference>
<dbReference type="FunFam" id="3.40.50.11660:FF:000002">
    <property type="entry name" value="Alpha-(1,3)-fucosyltransferase"/>
    <property type="match status" value="1"/>
</dbReference>
<dbReference type="Gene3D" id="3.40.50.11660">
    <property type="entry name" value="Glycosyl transferase family 10, C-terminal domain"/>
    <property type="match status" value="1"/>
</dbReference>
<dbReference type="InterPro" id="IPR017176">
    <property type="entry name" value="Alpha-1_3-FUT_met"/>
</dbReference>
<dbReference type="InterPro" id="IPR055270">
    <property type="entry name" value="Glyco_tran_10_C"/>
</dbReference>
<dbReference type="InterPro" id="IPR031481">
    <property type="entry name" value="Glyco_tran_10_N"/>
</dbReference>
<dbReference type="InterPro" id="IPR001503">
    <property type="entry name" value="Glyco_trans_10"/>
</dbReference>
<dbReference type="InterPro" id="IPR038577">
    <property type="entry name" value="GT10-like_C_sf"/>
</dbReference>
<dbReference type="PANTHER" id="PTHR11929">
    <property type="entry name" value="ALPHA- 1,3 -FUCOSYLTRANSFERASE"/>
    <property type="match status" value="1"/>
</dbReference>
<dbReference type="PANTHER" id="PTHR11929:SF198">
    <property type="entry name" value="ALPHA-(1,3)-FUCOSYLTRANSFERASE 11"/>
    <property type="match status" value="1"/>
</dbReference>
<dbReference type="Pfam" id="PF17039">
    <property type="entry name" value="Glyco_tran_10_N"/>
    <property type="match status" value="1"/>
</dbReference>
<dbReference type="Pfam" id="PF00852">
    <property type="entry name" value="Glyco_transf_10"/>
    <property type="match status" value="1"/>
</dbReference>
<dbReference type="PIRSF" id="PIRSF037332">
    <property type="entry name" value="Alpha1_3FUT_met"/>
    <property type="match status" value="1"/>
</dbReference>
<dbReference type="SUPFAM" id="SSF53756">
    <property type="entry name" value="UDP-Glycosyltransferase/glycogen phosphorylase"/>
    <property type="match status" value="1"/>
</dbReference>
<reference key="1">
    <citation type="journal article" date="2002" name="J. Biol. Chem.">
        <title>Composition of Drosophila melanogaster proteome involved in fucosylated glycan metabolism.</title>
        <authorList>
            <person name="Roos C."/>
            <person name="Kolmer M."/>
            <person name="Mattila P."/>
            <person name="Renkonen R."/>
        </authorList>
    </citation>
    <scope>NUCLEOTIDE SEQUENCE [MRNA]</scope>
    <source>
        <strain>C57BL/6J</strain>
        <tissue>Kidney</tissue>
    </source>
</reference>
<reference key="2">
    <citation type="journal article" date="2005" name="Science">
        <title>The transcriptional landscape of the mammalian genome.</title>
        <authorList>
            <person name="Carninci P."/>
            <person name="Kasukawa T."/>
            <person name="Katayama S."/>
            <person name="Gough J."/>
            <person name="Frith M.C."/>
            <person name="Maeda N."/>
            <person name="Oyama R."/>
            <person name="Ravasi T."/>
            <person name="Lenhard B."/>
            <person name="Wells C."/>
            <person name="Kodzius R."/>
            <person name="Shimokawa K."/>
            <person name="Bajic V.B."/>
            <person name="Brenner S.E."/>
            <person name="Batalov S."/>
            <person name="Forrest A.R."/>
            <person name="Zavolan M."/>
            <person name="Davis M.J."/>
            <person name="Wilming L.G."/>
            <person name="Aidinis V."/>
            <person name="Allen J.E."/>
            <person name="Ambesi-Impiombato A."/>
            <person name="Apweiler R."/>
            <person name="Aturaliya R.N."/>
            <person name="Bailey T.L."/>
            <person name="Bansal M."/>
            <person name="Baxter L."/>
            <person name="Beisel K.W."/>
            <person name="Bersano T."/>
            <person name="Bono H."/>
            <person name="Chalk A.M."/>
            <person name="Chiu K.P."/>
            <person name="Choudhary V."/>
            <person name="Christoffels A."/>
            <person name="Clutterbuck D.R."/>
            <person name="Crowe M.L."/>
            <person name="Dalla E."/>
            <person name="Dalrymple B.P."/>
            <person name="de Bono B."/>
            <person name="Della Gatta G."/>
            <person name="di Bernardo D."/>
            <person name="Down T."/>
            <person name="Engstrom P."/>
            <person name="Fagiolini M."/>
            <person name="Faulkner G."/>
            <person name="Fletcher C.F."/>
            <person name="Fukushima T."/>
            <person name="Furuno M."/>
            <person name="Futaki S."/>
            <person name="Gariboldi M."/>
            <person name="Georgii-Hemming P."/>
            <person name="Gingeras T.R."/>
            <person name="Gojobori T."/>
            <person name="Green R.E."/>
            <person name="Gustincich S."/>
            <person name="Harbers M."/>
            <person name="Hayashi Y."/>
            <person name="Hensch T.K."/>
            <person name="Hirokawa N."/>
            <person name="Hill D."/>
            <person name="Huminiecki L."/>
            <person name="Iacono M."/>
            <person name="Ikeo K."/>
            <person name="Iwama A."/>
            <person name="Ishikawa T."/>
            <person name="Jakt M."/>
            <person name="Kanapin A."/>
            <person name="Katoh M."/>
            <person name="Kawasawa Y."/>
            <person name="Kelso J."/>
            <person name="Kitamura H."/>
            <person name="Kitano H."/>
            <person name="Kollias G."/>
            <person name="Krishnan S.P."/>
            <person name="Kruger A."/>
            <person name="Kummerfeld S.K."/>
            <person name="Kurochkin I.V."/>
            <person name="Lareau L.F."/>
            <person name="Lazarevic D."/>
            <person name="Lipovich L."/>
            <person name="Liu J."/>
            <person name="Liuni S."/>
            <person name="McWilliam S."/>
            <person name="Madan Babu M."/>
            <person name="Madera M."/>
            <person name="Marchionni L."/>
            <person name="Matsuda H."/>
            <person name="Matsuzawa S."/>
            <person name="Miki H."/>
            <person name="Mignone F."/>
            <person name="Miyake S."/>
            <person name="Morris K."/>
            <person name="Mottagui-Tabar S."/>
            <person name="Mulder N."/>
            <person name="Nakano N."/>
            <person name="Nakauchi H."/>
            <person name="Ng P."/>
            <person name="Nilsson R."/>
            <person name="Nishiguchi S."/>
            <person name="Nishikawa S."/>
            <person name="Nori F."/>
            <person name="Ohara O."/>
            <person name="Okazaki Y."/>
            <person name="Orlando V."/>
            <person name="Pang K.C."/>
            <person name="Pavan W.J."/>
            <person name="Pavesi G."/>
            <person name="Pesole G."/>
            <person name="Petrovsky N."/>
            <person name="Piazza S."/>
            <person name="Reed J."/>
            <person name="Reid J.F."/>
            <person name="Ring B.Z."/>
            <person name="Ringwald M."/>
            <person name="Rost B."/>
            <person name="Ruan Y."/>
            <person name="Salzberg S.L."/>
            <person name="Sandelin A."/>
            <person name="Schneider C."/>
            <person name="Schoenbach C."/>
            <person name="Sekiguchi K."/>
            <person name="Semple C.A."/>
            <person name="Seno S."/>
            <person name="Sessa L."/>
            <person name="Sheng Y."/>
            <person name="Shibata Y."/>
            <person name="Shimada H."/>
            <person name="Shimada K."/>
            <person name="Silva D."/>
            <person name="Sinclair B."/>
            <person name="Sperling S."/>
            <person name="Stupka E."/>
            <person name="Sugiura K."/>
            <person name="Sultana R."/>
            <person name="Takenaka Y."/>
            <person name="Taki K."/>
            <person name="Tammoja K."/>
            <person name="Tan S.L."/>
            <person name="Tang S."/>
            <person name="Taylor M.S."/>
            <person name="Tegner J."/>
            <person name="Teichmann S.A."/>
            <person name="Ueda H.R."/>
            <person name="van Nimwegen E."/>
            <person name="Verardo R."/>
            <person name="Wei C.L."/>
            <person name="Yagi K."/>
            <person name="Yamanishi H."/>
            <person name="Zabarovsky E."/>
            <person name="Zhu S."/>
            <person name="Zimmer A."/>
            <person name="Hide W."/>
            <person name="Bult C."/>
            <person name="Grimmond S.M."/>
            <person name="Teasdale R.D."/>
            <person name="Liu E.T."/>
            <person name="Brusic V."/>
            <person name="Quackenbush J."/>
            <person name="Wahlestedt C."/>
            <person name="Mattick J.S."/>
            <person name="Hume D.A."/>
            <person name="Kai C."/>
            <person name="Sasaki D."/>
            <person name="Tomaru Y."/>
            <person name="Fukuda S."/>
            <person name="Kanamori-Katayama M."/>
            <person name="Suzuki M."/>
            <person name="Aoki J."/>
            <person name="Arakawa T."/>
            <person name="Iida J."/>
            <person name="Imamura K."/>
            <person name="Itoh M."/>
            <person name="Kato T."/>
            <person name="Kawaji H."/>
            <person name="Kawagashira N."/>
            <person name="Kawashima T."/>
            <person name="Kojima M."/>
            <person name="Kondo S."/>
            <person name="Konno H."/>
            <person name="Nakano K."/>
            <person name="Ninomiya N."/>
            <person name="Nishio T."/>
            <person name="Okada M."/>
            <person name="Plessy C."/>
            <person name="Shibata K."/>
            <person name="Shiraki T."/>
            <person name="Suzuki S."/>
            <person name="Tagami M."/>
            <person name="Waki K."/>
            <person name="Watahiki A."/>
            <person name="Okamura-Oho Y."/>
            <person name="Suzuki H."/>
            <person name="Kawai J."/>
            <person name="Hayashizaki Y."/>
        </authorList>
    </citation>
    <scope>NUCLEOTIDE SEQUENCE [LARGE SCALE MRNA]</scope>
    <source>
        <strain>C57BL/6J</strain>
        <tissue>Corpora quadrigemina</tissue>
        <tissue>Head</tissue>
        <tissue>Ovary</tissue>
        <tissue>Uterus</tissue>
    </source>
</reference>
<reference key="3">
    <citation type="journal article" date="2004" name="Genome Res.">
        <title>The status, quality, and expansion of the NIH full-length cDNA project: the Mammalian Gene Collection (MGC).</title>
        <authorList>
            <consortium name="The MGC Project Team"/>
        </authorList>
    </citation>
    <scope>NUCLEOTIDE SEQUENCE [LARGE SCALE MRNA]</scope>
    <source>
        <tissue>Brain</tissue>
    </source>
</reference>
<reference key="4">
    <citation type="journal article" date="2002" name="Mamm. Genome">
        <title>Comparison of human and mouse Fuc-TX and Fuc-TXI genes, and expression studies in the mouse.</title>
        <authorList>
            <person name="Baboval T."/>
            <person name="Smith F.I."/>
        </authorList>
    </citation>
    <scope>TISSUE SPECIFICITY</scope>
</reference>
<reference key="5">
    <citation type="journal article" date="2009" name="Mol. Cell. Proteomics">
        <title>Large scale localization of protein phosphorylation by use of electron capture dissociation mass spectrometry.</title>
        <authorList>
            <person name="Sweet S.M."/>
            <person name="Bailey C.M."/>
            <person name="Cunningham D.L."/>
            <person name="Heath J.K."/>
            <person name="Cooper H.J."/>
        </authorList>
    </citation>
    <scope>IDENTIFICATION BY MASS SPECTROMETRY [LARGE SCALE ANALYSIS]</scope>
    <source>
        <tissue>Embryonic fibroblast</tissue>
    </source>
</reference>
<gene>
    <name type="primary">Fut11</name>
    <name evidence="2" type="synonym">Pofut4</name>
</gene>
<proteinExistence type="evidence at protein level"/>
<keyword id="KW-1015">Disulfide bond</keyword>
<keyword id="KW-0256">Endoplasmic reticulum</keyword>
<keyword id="KW-0325">Glycoprotein</keyword>
<keyword id="KW-0328">Glycosyltransferase</keyword>
<keyword id="KW-0472">Membrane</keyword>
<keyword id="KW-1185">Reference proteome</keyword>
<keyword id="KW-0735">Signal-anchor</keyword>
<keyword id="KW-0808">Transferase</keyword>
<keyword id="KW-0812">Transmembrane</keyword>
<keyword id="KW-1133">Transmembrane helix</keyword>
<organism>
    <name type="scientific">Mus musculus</name>
    <name type="common">Mouse</name>
    <dbReference type="NCBI Taxonomy" id="10090"/>
    <lineage>
        <taxon>Eukaryota</taxon>
        <taxon>Metazoa</taxon>
        <taxon>Chordata</taxon>
        <taxon>Craniata</taxon>
        <taxon>Vertebrata</taxon>
        <taxon>Euteleostomi</taxon>
        <taxon>Mammalia</taxon>
        <taxon>Eutheria</taxon>
        <taxon>Euarchontoglires</taxon>
        <taxon>Glires</taxon>
        <taxon>Rodentia</taxon>
        <taxon>Myomorpha</taxon>
        <taxon>Muroidea</taxon>
        <taxon>Muridae</taxon>
        <taxon>Murinae</taxon>
        <taxon>Mus</taxon>
        <taxon>Mus</taxon>
    </lineage>
</organism>
<protein>
    <recommendedName>
        <fullName>GDP-fucose protein O-fucosyltransferase 4</fullName>
        <ecNumber evidence="2">2.4.1.221</ecNumber>
    </recommendedName>
    <alternativeName>
        <fullName>Alpha-(1,3)-fucosyltransferase 11</fullName>
        <ecNumber evidence="2">2.4.1.-</ecNumber>
    </alternativeName>
    <alternativeName>
        <fullName>Fucosyltransferase XI</fullName>
        <shortName>Fuc-TXI</shortName>
        <shortName>FucT-XI</shortName>
    </alternativeName>
    <alternativeName>
        <fullName>Galactoside 3-L-fucosyltransferase 11</fullName>
        <shortName>Fucosyltransferase 11</shortName>
    </alternativeName>
</protein>
<comment type="function">
    <text evidence="2">Protein O-fucosyltransferase that specifically catalyzes O-fucosylation of serine or threonine residues in EMI domains of target proteins, such as MMRN1, MMRN2 and EMID1. Attaches fucose through an O-glycosidic linkage. O-fucosylation of EMI domain-containing proteins may be required for facilitating protein folding and secretion. Also shows minor alpha-(1,3)-fucosyltransferase activity toward activity toward biantennary N-glycan acceptors. However, this was tested with a library of synthetic substrates and this activity is unsure in vivo.</text>
</comment>
<comment type="catalytic activity">
    <reaction evidence="2">
        <text>L-threonyl-[protein] + GDP-beta-L-fucose = 3-O-(alpha-L-fucosyl)-L-threonyl-[protein] + GDP + H(+)</text>
        <dbReference type="Rhea" id="RHEA:70491"/>
        <dbReference type="Rhea" id="RHEA-COMP:11060"/>
        <dbReference type="Rhea" id="RHEA-COMP:17915"/>
        <dbReference type="ChEBI" id="CHEBI:15378"/>
        <dbReference type="ChEBI" id="CHEBI:30013"/>
        <dbReference type="ChEBI" id="CHEBI:57273"/>
        <dbReference type="ChEBI" id="CHEBI:58189"/>
        <dbReference type="ChEBI" id="CHEBI:189631"/>
        <dbReference type="EC" id="2.4.1.221"/>
    </reaction>
    <physiologicalReaction direction="left-to-right" evidence="2">
        <dbReference type="Rhea" id="RHEA:70492"/>
    </physiologicalReaction>
</comment>
<comment type="catalytic activity">
    <reaction evidence="2">
        <text>L-seryl-[protein] + GDP-beta-L-fucose = 3-O-(alpha-L-fucosyl)-L-seryl-[protein] + GDP + H(+)</text>
        <dbReference type="Rhea" id="RHEA:63644"/>
        <dbReference type="Rhea" id="RHEA-COMP:9863"/>
        <dbReference type="Rhea" id="RHEA-COMP:17914"/>
        <dbReference type="ChEBI" id="CHEBI:15378"/>
        <dbReference type="ChEBI" id="CHEBI:29999"/>
        <dbReference type="ChEBI" id="CHEBI:57273"/>
        <dbReference type="ChEBI" id="CHEBI:58189"/>
        <dbReference type="ChEBI" id="CHEBI:189632"/>
        <dbReference type="EC" id="2.4.1.221"/>
    </reaction>
    <physiologicalReaction direction="left-to-right" evidence="2">
        <dbReference type="Rhea" id="RHEA:63645"/>
    </physiologicalReaction>
</comment>
<comment type="pathway">
    <text evidence="2">Protein modification; protein glycosylation.</text>
</comment>
<comment type="subcellular location">
    <subcellularLocation>
        <location evidence="2">Endoplasmic reticulum membrane</location>
        <topology evidence="3">Single-pass type II membrane protein</topology>
    </subcellularLocation>
</comment>
<comment type="tissue specificity">
    <text evidence="4">Widely expressed. Expressed at slightly higher level in heart, kidney and lung.</text>
</comment>
<comment type="similarity">
    <text evidence="5">Belongs to the glycosyltransferase 10 family.</text>
</comment>
<comment type="online information" name="Functional Glycomics Gateway - GTase">
    <link uri="http://www.functionalglycomics.org/glycomics/molecule/jsp/glycoEnzyme/viewGlycoEnzyme.jsp?gbpId=gt_mou_618"/>
    <text>Fucosyltransferase 11</text>
</comment>
<evidence type="ECO:0000250" key="1">
    <source>
        <dbReference type="UniProtKB" id="Q11130"/>
    </source>
</evidence>
<evidence type="ECO:0000250" key="2">
    <source>
        <dbReference type="UniProtKB" id="Q495W5"/>
    </source>
</evidence>
<evidence type="ECO:0000255" key="3"/>
<evidence type="ECO:0000269" key="4">
    <source>
    </source>
</evidence>
<evidence type="ECO:0000305" key="5"/>
<accession>Q8BHC9</accession>
<accession>Q9CXS9</accession>